<protein>
    <recommendedName>
        <fullName evidence="1">Peptidyl-tRNA hydrolase</fullName>
        <shortName evidence="1">Pth</shortName>
        <ecNumber evidence="1">3.1.1.29</ecNumber>
    </recommendedName>
</protein>
<dbReference type="EC" id="3.1.1.29" evidence="1"/>
<dbReference type="EMBL" id="FM204884">
    <property type="protein sequence ID" value="CAW97561.1"/>
    <property type="molecule type" value="Genomic_DNA"/>
</dbReference>
<dbReference type="SMR" id="C0MC67"/>
<dbReference type="KEGG" id="seq:SZO_00060"/>
<dbReference type="eggNOG" id="COG0193">
    <property type="taxonomic scope" value="Bacteria"/>
</dbReference>
<dbReference type="HOGENOM" id="CLU_062456_4_1_9"/>
<dbReference type="Proteomes" id="UP000001368">
    <property type="component" value="Chromosome"/>
</dbReference>
<dbReference type="GO" id="GO:0005737">
    <property type="term" value="C:cytoplasm"/>
    <property type="evidence" value="ECO:0007669"/>
    <property type="project" value="UniProtKB-SubCell"/>
</dbReference>
<dbReference type="GO" id="GO:0004045">
    <property type="term" value="F:peptidyl-tRNA hydrolase activity"/>
    <property type="evidence" value="ECO:0007669"/>
    <property type="project" value="UniProtKB-UniRule"/>
</dbReference>
<dbReference type="GO" id="GO:0000049">
    <property type="term" value="F:tRNA binding"/>
    <property type="evidence" value="ECO:0007669"/>
    <property type="project" value="UniProtKB-UniRule"/>
</dbReference>
<dbReference type="GO" id="GO:0006515">
    <property type="term" value="P:protein quality control for misfolded or incompletely synthesized proteins"/>
    <property type="evidence" value="ECO:0007669"/>
    <property type="project" value="UniProtKB-UniRule"/>
</dbReference>
<dbReference type="GO" id="GO:0072344">
    <property type="term" value="P:rescue of stalled ribosome"/>
    <property type="evidence" value="ECO:0007669"/>
    <property type="project" value="UniProtKB-UniRule"/>
</dbReference>
<dbReference type="CDD" id="cd00462">
    <property type="entry name" value="PTH"/>
    <property type="match status" value="1"/>
</dbReference>
<dbReference type="FunFam" id="3.40.50.1470:FF:000001">
    <property type="entry name" value="Peptidyl-tRNA hydrolase"/>
    <property type="match status" value="1"/>
</dbReference>
<dbReference type="Gene3D" id="3.40.50.1470">
    <property type="entry name" value="Peptidyl-tRNA hydrolase"/>
    <property type="match status" value="1"/>
</dbReference>
<dbReference type="HAMAP" id="MF_00083">
    <property type="entry name" value="Pept_tRNA_hydro_bact"/>
    <property type="match status" value="1"/>
</dbReference>
<dbReference type="InterPro" id="IPR001328">
    <property type="entry name" value="Pept_tRNA_hydro"/>
</dbReference>
<dbReference type="InterPro" id="IPR018171">
    <property type="entry name" value="Pept_tRNA_hydro_CS"/>
</dbReference>
<dbReference type="InterPro" id="IPR036416">
    <property type="entry name" value="Pept_tRNA_hydro_sf"/>
</dbReference>
<dbReference type="NCBIfam" id="TIGR00447">
    <property type="entry name" value="pth"/>
    <property type="match status" value="1"/>
</dbReference>
<dbReference type="PANTHER" id="PTHR17224">
    <property type="entry name" value="PEPTIDYL-TRNA HYDROLASE"/>
    <property type="match status" value="1"/>
</dbReference>
<dbReference type="PANTHER" id="PTHR17224:SF1">
    <property type="entry name" value="PEPTIDYL-TRNA HYDROLASE"/>
    <property type="match status" value="1"/>
</dbReference>
<dbReference type="Pfam" id="PF01195">
    <property type="entry name" value="Pept_tRNA_hydro"/>
    <property type="match status" value="1"/>
</dbReference>
<dbReference type="SUPFAM" id="SSF53178">
    <property type="entry name" value="Peptidyl-tRNA hydrolase-like"/>
    <property type="match status" value="1"/>
</dbReference>
<dbReference type="PROSITE" id="PS01195">
    <property type="entry name" value="PEPT_TRNA_HYDROL_1"/>
    <property type="match status" value="1"/>
</dbReference>
<dbReference type="PROSITE" id="PS01196">
    <property type="entry name" value="PEPT_TRNA_HYDROL_2"/>
    <property type="match status" value="1"/>
</dbReference>
<sequence length="189" mass="21155">MVKMIVGLGNPGSKYQQTKHNVGFMAVDRLVKDLDISFTEDKTFKALVGSTFINQEKIYFVKPTTFMNNSGLVVRALLTYYNISTKDLMVIYDDLDMAVGKIRLRQKGSAGGHNGIKSIIAHIGTQEFDRVKIGIGRPSHGMSVINHVLGKFDTDDMITINIALDKVDKAINYYLQEKSIEKTMQQFNG</sequence>
<comment type="function">
    <text evidence="1">Hydrolyzes ribosome-free peptidyl-tRNAs (with 1 or more amino acids incorporated), which drop off the ribosome during protein synthesis, or as a result of ribosome stalling.</text>
</comment>
<comment type="function">
    <text evidence="1">Catalyzes the release of premature peptidyl moieties from peptidyl-tRNA molecules trapped in stalled 50S ribosomal subunits, and thus maintains levels of free tRNAs and 50S ribosomes.</text>
</comment>
<comment type="catalytic activity">
    <reaction evidence="1">
        <text>an N-acyl-L-alpha-aminoacyl-tRNA + H2O = an N-acyl-L-amino acid + a tRNA + H(+)</text>
        <dbReference type="Rhea" id="RHEA:54448"/>
        <dbReference type="Rhea" id="RHEA-COMP:10123"/>
        <dbReference type="Rhea" id="RHEA-COMP:13883"/>
        <dbReference type="ChEBI" id="CHEBI:15377"/>
        <dbReference type="ChEBI" id="CHEBI:15378"/>
        <dbReference type="ChEBI" id="CHEBI:59874"/>
        <dbReference type="ChEBI" id="CHEBI:78442"/>
        <dbReference type="ChEBI" id="CHEBI:138191"/>
        <dbReference type="EC" id="3.1.1.29"/>
    </reaction>
</comment>
<comment type="subunit">
    <text evidence="1">Monomer.</text>
</comment>
<comment type="subcellular location">
    <subcellularLocation>
        <location evidence="1">Cytoplasm</location>
    </subcellularLocation>
</comment>
<comment type="similarity">
    <text evidence="1">Belongs to the PTH family.</text>
</comment>
<feature type="chain" id="PRO_1000202598" description="Peptidyl-tRNA hydrolase">
    <location>
        <begin position="1"/>
        <end position="189"/>
    </location>
</feature>
<feature type="active site" description="Proton acceptor" evidence="1">
    <location>
        <position position="20"/>
    </location>
</feature>
<feature type="binding site" evidence="1">
    <location>
        <position position="15"/>
    </location>
    <ligand>
        <name>tRNA</name>
        <dbReference type="ChEBI" id="CHEBI:17843"/>
    </ligand>
</feature>
<feature type="binding site" evidence="1">
    <location>
        <position position="66"/>
    </location>
    <ligand>
        <name>tRNA</name>
        <dbReference type="ChEBI" id="CHEBI:17843"/>
    </ligand>
</feature>
<feature type="binding site" evidence="1">
    <location>
        <position position="68"/>
    </location>
    <ligand>
        <name>tRNA</name>
        <dbReference type="ChEBI" id="CHEBI:17843"/>
    </ligand>
</feature>
<feature type="binding site" evidence="1">
    <location>
        <position position="114"/>
    </location>
    <ligand>
        <name>tRNA</name>
        <dbReference type="ChEBI" id="CHEBI:17843"/>
    </ligand>
</feature>
<feature type="site" description="Discriminates between blocked and unblocked aminoacyl-tRNA" evidence="1">
    <location>
        <position position="10"/>
    </location>
</feature>
<feature type="site" description="Stabilizes the basic form of H active site to accept a proton" evidence="1">
    <location>
        <position position="93"/>
    </location>
</feature>
<name>PTH_STRS7</name>
<keyword id="KW-0963">Cytoplasm</keyword>
<keyword id="KW-0378">Hydrolase</keyword>
<keyword id="KW-0694">RNA-binding</keyword>
<keyword id="KW-0820">tRNA-binding</keyword>
<proteinExistence type="inferred from homology"/>
<reference key="1">
    <citation type="journal article" date="2009" name="PLoS Pathog.">
        <title>Genomic evidence for the evolution of Streptococcus equi: host restriction, increased virulence, and genetic exchange with human pathogens.</title>
        <authorList>
            <person name="Holden M.T.G."/>
            <person name="Heather Z."/>
            <person name="Paillot R."/>
            <person name="Steward K.F."/>
            <person name="Webb K."/>
            <person name="Ainslie F."/>
            <person name="Jourdan T."/>
            <person name="Bason N.C."/>
            <person name="Holroyd N.E."/>
            <person name="Mungall K."/>
            <person name="Quail M.A."/>
            <person name="Sanders M."/>
            <person name="Simmonds M."/>
            <person name="Willey D."/>
            <person name="Brooks K."/>
            <person name="Aanensen D.M."/>
            <person name="Spratt B.G."/>
            <person name="Jolley K.A."/>
            <person name="Maiden M.C.J."/>
            <person name="Kehoe M."/>
            <person name="Chanter N."/>
            <person name="Bentley S.D."/>
            <person name="Robinson C."/>
            <person name="Maskell D.J."/>
            <person name="Parkhill J."/>
            <person name="Waller A.S."/>
        </authorList>
    </citation>
    <scope>NUCLEOTIDE SEQUENCE [LARGE SCALE GENOMIC DNA]</scope>
    <source>
        <strain>H70</strain>
    </source>
</reference>
<gene>
    <name evidence="1" type="primary">pth</name>
    <name type="ordered locus">SZO_00060</name>
</gene>
<organism>
    <name type="scientific">Streptococcus equi subsp. zooepidemicus (strain H70)</name>
    <dbReference type="NCBI Taxonomy" id="553483"/>
    <lineage>
        <taxon>Bacteria</taxon>
        <taxon>Bacillati</taxon>
        <taxon>Bacillota</taxon>
        <taxon>Bacilli</taxon>
        <taxon>Lactobacillales</taxon>
        <taxon>Streptococcaceae</taxon>
        <taxon>Streptococcus</taxon>
    </lineage>
</organism>
<accession>C0MC67</accession>
<evidence type="ECO:0000255" key="1">
    <source>
        <dbReference type="HAMAP-Rule" id="MF_00083"/>
    </source>
</evidence>